<accession>Q2S7U9</accession>
<keyword id="KW-0067">ATP-binding</keyword>
<keyword id="KW-0436">Ligase</keyword>
<keyword id="KW-0479">Metal-binding</keyword>
<keyword id="KW-0547">Nucleotide-binding</keyword>
<keyword id="KW-0671">Queuosine biosynthesis</keyword>
<keyword id="KW-1185">Reference proteome</keyword>
<keyword id="KW-0862">Zinc</keyword>
<comment type="function">
    <text evidence="1">Catalyzes the ATP-dependent conversion of 7-carboxy-7-deazaguanine (CDG) to 7-cyano-7-deazaguanine (preQ(0)).</text>
</comment>
<comment type="catalytic activity">
    <reaction evidence="1">
        <text>7-carboxy-7-deazaguanine + NH4(+) + ATP = 7-cyano-7-deazaguanine + ADP + phosphate + H2O + H(+)</text>
        <dbReference type="Rhea" id="RHEA:27982"/>
        <dbReference type="ChEBI" id="CHEBI:15377"/>
        <dbReference type="ChEBI" id="CHEBI:15378"/>
        <dbReference type="ChEBI" id="CHEBI:28938"/>
        <dbReference type="ChEBI" id="CHEBI:30616"/>
        <dbReference type="ChEBI" id="CHEBI:43474"/>
        <dbReference type="ChEBI" id="CHEBI:45075"/>
        <dbReference type="ChEBI" id="CHEBI:61036"/>
        <dbReference type="ChEBI" id="CHEBI:456216"/>
        <dbReference type="EC" id="6.3.4.20"/>
    </reaction>
</comment>
<comment type="cofactor">
    <cofactor evidence="1">
        <name>Zn(2+)</name>
        <dbReference type="ChEBI" id="CHEBI:29105"/>
    </cofactor>
    <text evidence="1">Binds 1 zinc ion per subunit.</text>
</comment>
<comment type="pathway">
    <text evidence="1">Purine metabolism; 7-cyano-7-deazaguanine biosynthesis.</text>
</comment>
<comment type="similarity">
    <text evidence="1">Belongs to the QueC family.</text>
</comment>
<proteinExistence type="inferred from homology"/>
<gene>
    <name evidence="1" type="primary">queC</name>
    <name type="ordered locus">HCH_06642</name>
</gene>
<feature type="chain" id="PRO_0000246851" description="7-cyano-7-deazaguanine synthase">
    <location>
        <begin position="1"/>
        <end position="231"/>
    </location>
</feature>
<feature type="binding site" evidence="1">
    <location>
        <begin position="17"/>
        <end position="27"/>
    </location>
    <ligand>
        <name>ATP</name>
        <dbReference type="ChEBI" id="CHEBI:30616"/>
    </ligand>
</feature>
<feature type="binding site" evidence="1">
    <location>
        <position position="193"/>
    </location>
    <ligand>
        <name>Zn(2+)</name>
        <dbReference type="ChEBI" id="CHEBI:29105"/>
    </ligand>
</feature>
<feature type="binding site" evidence="1">
    <location>
        <position position="201"/>
    </location>
    <ligand>
        <name>Zn(2+)</name>
        <dbReference type="ChEBI" id="CHEBI:29105"/>
    </ligand>
</feature>
<feature type="binding site" evidence="1">
    <location>
        <position position="204"/>
    </location>
    <ligand>
        <name>Zn(2+)</name>
        <dbReference type="ChEBI" id="CHEBI:29105"/>
    </ligand>
</feature>
<feature type="binding site" evidence="1">
    <location>
        <position position="207"/>
    </location>
    <ligand>
        <name>Zn(2+)</name>
        <dbReference type="ChEBI" id="CHEBI:29105"/>
    </ligand>
</feature>
<sequence length="231" mass="25435">MNQSDTSLIPNRAVAIFSGGMDSFTLLNELVQEGKEVFALSFNYGQRHSKELECARQVCESLNIAHKIIDITAINSLLAGSSLTDDIQVPEGHYEEENMKSTVVPNRNMILLSLAIGYAVSLKAEAVYYGAHGGDHAIYPDCRPAFVEIMSEASKLANYEPVEVRAPYLYETKIEILRRGLALGLDYGQTWTCYNGREKACGKCGSCVERLEAFDKNDATDPLAYESVCTG</sequence>
<protein>
    <recommendedName>
        <fullName evidence="1">7-cyano-7-deazaguanine synthase</fullName>
        <ecNumber evidence="1">6.3.4.20</ecNumber>
    </recommendedName>
    <alternativeName>
        <fullName evidence="1">7-cyano-7-carbaguanine synthase</fullName>
    </alternativeName>
    <alternativeName>
        <fullName evidence="1">PreQ(0) synthase</fullName>
    </alternativeName>
    <alternativeName>
        <fullName evidence="1">Queuosine biosynthesis protein QueC</fullName>
    </alternativeName>
</protein>
<evidence type="ECO:0000255" key="1">
    <source>
        <dbReference type="HAMAP-Rule" id="MF_01633"/>
    </source>
</evidence>
<name>QUEC_HAHCH</name>
<dbReference type="EC" id="6.3.4.20" evidence="1"/>
<dbReference type="EMBL" id="CP000155">
    <property type="protein sequence ID" value="ABC33275.1"/>
    <property type="molecule type" value="Genomic_DNA"/>
</dbReference>
<dbReference type="RefSeq" id="WP_011400327.1">
    <property type="nucleotide sequence ID" value="NC_007645.1"/>
</dbReference>
<dbReference type="SMR" id="Q2S7U9"/>
<dbReference type="STRING" id="349521.HCH_06642"/>
<dbReference type="KEGG" id="hch:HCH_06642"/>
<dbReference type="eggNOG" id="COG0603">
    <property type="taxonomic scope" value="Bacteria"/>
</dbReference>
<dbReference type="HOGENOM" id="CLU_081854_1_0_6"/>
<dbReference type="UniPathway" id="UPA00391"/>
<dbReference type="Proteomes" id="UP000000238">
    <property type="component" value="Chromosome"/>
</dbReference>
<dbReference type="GO" id="GO:0005524">
    <property type="term" value="F:ATP binding"/>
    <property type="evidence" value="ECO:0007669"/>
    <property type="project" value="UniProtKB-UniRule"/>
</dbReference>
<dbReference type="GO" id="GO:0016879">
    <property type="term" value="F:ligase activity, forming carbon-nitrogen bonds"/>
    <property type="evidence" value="ECO:0007669"/>
    <property type="project" value="UniProtKB-UniRule"/>
</dbReference>
<dbReference type="GO" id="GO:0008270">
    <property type="term" value="F:zinc ion binding"/>
    <property type="evidence" value="ECO:0007669"/>
    <property type="project" value="UniProtKB-UniRule"/>
</dbReference>
<dbReference type="GO" id="GO:0008616">
    <property type="term" value="P:queuosine biosynthetic process"/>
    <property type="evidence" value="ECO:0007669"/>
    <property type="project" value="UniProtKB-UniRule"/>
</dbReference>
<dbReference type="CDD" id="cd01995">
    <property type="entry name" value="QueC-like"/>
    <property type="match status" value="1"/>
</dbReference>
<dbReference type="Gene3D" id="3.40.50.620">
    <property type="entry name" value="HUPs"/>
    <property type="match status" value="1"/>
</dbReference>
<dbReference type="HAMAP" id="MF_01633">
    <property type="entry name" value="QueC"/>
    <property type="match status" value="1"/>
</dbReference>
<dbReference type="InterPro" id="IPR018317">
    <property type="entry name" value="QueC"/>
</dbReference>
<dbReference type="InterPro" id="IPR014729">
    <property type="entry name" value="Rossmann-like_a/b/a_fold"/>
</dbReference>
<dbReference type="NCBIfam" id="TIGR00364">
    <property type="entry name" value="7-cyano-7-deazaguanine synthase QueC"/>
    <property type="match status" value="1"/>
</dbReference>
<dbReference type="PANTHER" id="PTHR42914">
    <property type="entry name" value="7-CYANO-7-DEAZAGUANINE SYNTHASE"/>
    <property type="match status" value="1"/>
</dbReference>
<dbReference type="PANTHER" id="PTHR42914:SF1">
    <property type="entry name" value="7-CYANO-7-DEAZAGUANINE SYNTHASE"/>
    <property type="match status" value="1"/>
</dbReference>
<dbReference type="Pfam" id="PF06508">
    <property type="entry name" value="QueC"/>
    <property type="match status" value="1"/>
</dbReference>
<dbReference type="PIRSF" id="PIRSF006293">
    <property type="entry name" value="ExsB"/>
    <property type="match status" value="1"/>
</dbReference>
<dbReference type="SUPFAM" id="SSF52402">
    <property type="entry name" value="Adenine nucleotide alpha hydrolases-like"/>
    <property type="match status" value="1"/>
</dbReference>
<organism>
    <name type="scientific">Hahella chejuensis (strain KCTC 2396)</name>
    <dbReference type="NCBI Taxonomy" id="349521"/>
    <lineage>
        <taxon>Bacteria</taxon>
        <taxon>Pseudomonadati</taxon>
        <taxon>Pseudomonadota</taxon>
        <taxon>Gammaproteobacteria</taxon>
        <taxon>Oceanospirillales</taxon>
        <taxon>Hahellaceae</taxon>
        <taxon>Hahella</taxon>
    </lineage>
</organism>
<reference key="1">
    <citation type="journal article" date="2005" name="Nucleic Acids Res.">
        <title>Genomic blueprint of Hahella chejuensis, a marine microbe producing an algicidal agent.</title>
        <authorList>
            <person name="Jeong H."/>
            <person name="Yim J.H."/>
            <person name="Lee C."/>
            <person name="Choi S.-H."/>
            <person name="Park Y.K."/>
            <person name="Yoon S.H."/>
            <person name="Hur C.-G."/>
            <person name="Kang H.-Y."/>
            <person name="Kim D."/>
            <person name="Lee H.H."/>
            <person name="Park K.H."/>
            <person name="Park S.-H."/>
            <person name="Park H.-S."/>
            <person name="Lee H.K."/>
            <person name="Oh T.K."/>
            <person name="Kim J.F."/>
        </authorList>
    </citation>
    <scope>NUCLEOTIDE SEQUENCE [LARGE SCALE GENOMIC DNA]</scope>
    <source>
        <strain>KCTC 2396</strain>
    </source>
</reference>